<comment type="function">
    <text evidence="1">This is one of the proteins that bind and probably mediate the attachment of the 5S RNA into the large ribosomal subunit, where it forms part of the central protuberance. In the 70S ribosome it contacts protein S13 of the 30S subunit (bridge B1b), connecting the 2 subunits; this bridge is implicated in subunit movement. Contacts the P site tRNA; the 5S rRNA and some of its associated proteins might help stabilize positioning of ribosome-bound tRNAs.</text>
</comment>
<comment type="subunit">
    <text evidence="1">Part of the 50S ribosomal subunit; part of the 5S rRNA/L5/L18/L25 subcomplex. Contacts the 5S rRNA and the P site tRNA. Forms a bridge to the 30S subunit in the 70S ribosome.</text>
</comment>
<comment type="similarity">
    <text evidence="1">Belongs to the universal ribosomal protein uL5 family.</text>
</comment>
<feature type="chain" id="PRO_0000125001" description="Large ribosomal subunit protein uL5">
    <location>
        <begin position="1"/>
        <end position="180"/>
    </location>
</feature>
<evidence type="ECO:0000255" key="1">
    <source>
        <dbReference type="HAMAP-Rule" id="MF_01333"/>
    </source>
</evidence>
<evidence type="ECO:0000305" key="2"/>
<name>RL5_STRPN</name>
<organism>
    <name type="scientific">Streptococcus pneumoniae serotype 4 (strain ATCC BAA-334 / TIGR4)</name>
    <dbReference type="NCBI Taxonomy" id="170187"/>
    <lineage>
        <taxon>Bacteria</taxon>
        <taxon>Bacillati</taxon>
        <taxon>Bacillota</taxon>
        <taxon>Bacilli</taxon>
        <taxon>Lactobacillales</taxon>
        <taxon>Streptococcaceae</taxon>
        <taxon>Streptococcus</taxon>
    </lineage>
</organism>
<gene>
    <name evidence="1" type="primary">rplE</name>
    <name type="ordered locus">SP_0221</name>
</gene>
<accession>Q97SV1</accession>
<keyword id="KW-1185">Reference proteome</keyword>
<keyword id="KW-0687">Ribonucleoprotein</keyword>
<keyword id="KW-0689">Ribosomal protein</keyword>
<keyword id="KW-0694">RNA-binding</keyword>
<keyword id="KW-0699">rRNA-binding</keyword>
<keyword id="KW-0820">tRNA-binding</keyword>
<reference key="1">
    <citation type="journal article" date="2001" name="Science">
        <title>Complete genome sequence of a virulent isolate of Streptococcus pneumoniae.</title>
        <authorList>
            <person name="Tettelin H."/>
            <person name="Nelson K.E."/>
            <person name="Paulsen I.T."/>
            <person name="Eisen J.A."/>
            <person name="Read T.D."/>
            <person name="Peterson S.N."/>
            <person name="Heidelberg J.F."/>
            <person name="DeBoy R.T."/>
            <person name="Haft D.H."/>
            <person name="Dodson R.J."/>
            <person name="Durkin A.S."/>
            <person name="Gwinn M.L."/>
            <person name="Kolonay J.F."/>
            <person name="Nelson W.C."/>
            <person name="Peterson J.D."/>
            <person name="Umayam L.A."/>
            <person name="White O."/>
            <person name="Salzberg S.L."/>
            <person name="Lewis M.R."/>
            <person name="Radune D."/>
            <person name="Holtzapple E.K."/>
            <person name="Khouri H.M."/>
            <person name="Wolf A.M."/>
            <person name="Utterback T.R."/>
            <person name="Hansen C.L."/>
            <person name="McDonald L.A."/>
            <person name="Feldblyum T.V."/>
            <person name="Angiuoli S.V."/>
            <person name="Dickinson T."/>
            <person name="Hickey E.K."/>
            <person name="Holt I.E."/>
            <person name="Loftus B.J."/>
            <person name="Yang F."/>
            <person name="Smith H.O."/>
            <person name="Venter J.C."/>
            <person name="Dougherty B.A."/>
            <person name="Morrison D.A."/>
            <person name="Hollingshead S.K."/>
            <person name="Fraser C.M."/>
        </authorList>
    </citation>
    <scope>NUCLEOTIDE SEQUENCE [LARGE SCALE GENOMIC DNA]</scope>
    <source>
        <strain>ATCC BAA-334 / TIGR4</strain>
    </source>
</reference>
<proteinExistence type="inferred from homology"/>
<sequence length="180" mass="19774">MANRLKEKYLNEVVPALTEQFNYSSVMAVPKVDKIVLNMGVGEAVSNAKSLEKAAEELALISGQKPLITKAKKSIAGFRLREGVAIGAKVTLRGERMYEFLDKLVSVSLPRVRDFHGVPTKSFDGRGNYTLGVKEQLIFPEINFDDVDKTRGLDIVIVTTANTDEESRALLTGLGMPFAK</sequence>
<dbReference type="EMBL" id="AE005672">
    <property type="protein sequence ID" value="AAK74401.1"/>
    <property type="molecule type" value="Genomic_DNA"/>
</dbReference>
<dbReference type="PIR" id="A97897">
    <property type="entry name" value="A97897"/>
</dbReference>
<dbReference type="PIR" id="H95025">
    <property type="entry name" value="H95025"/>
</dbReference>
<dbReference type="RefSeq" id="WP_000013542.1">
    <property type="nucleotide sequence ID" value="NZ_CP155539.1"/>
</dbReference>
<dbReference type="SMR" id="Q97SV1"/>
<dbReference type="PaxDb" id="170187-SP_0221"/>
<dbReference type="EnsemblBacteria" id="AAK74401">
    <property type="protein sequence ID" value="AAK74401"/>
    <property type="gene ID" value="SP_0221"/>
</dbReference>
<dbReference type="GeneID" id="93738969"/>
<dbReference type="KEGG" id="spn:SP_0221"/>
<dbReference type="eggNOG" id="COG0094">
    <property type="taxonomic scope" value="Bacteria"/>
</dbReference>
<dbReference type="PhylomeDB" id="Q97SV1"/>
<dbReference type="BioCyc" id="SPNE170187:G1FZB-226-MONOMER"/>
<dbReference type="Proteomes" id="UP000000585">
    <property type="component" value="Chromosome"/>
</dbReference>
<dbReference type="GO" id="GO:1990904">
    <property type="term" value="C:ribonucleoprotein complex"/>
    <property type="evidence" value="ECO:0007669"/>
    <property type="project" value="UniProtKB-KW"/>
</dbReference>
<dbReference type="GO" id="GO:0005840">
    <property type="term" value="C:ribosome"/>
    <property type="evidence" value="ECO:0007669"/>
    <property type="project" value="UniProtKB-KW"/>
</dbReference>
<dbReference type="GO" id="GO:0019843">
    <property type="term" value="F:rRNA binding"/>
    <property type="evidence" value="ECO:0007669"/>
    <property type="project" value="UniProtKB-UniRule"/>
</dbReference>
<dbReference type="GO" id="GO:0003735">
    <property type="term" value="F:structural constituent of ribosome"/>
    <property type="evidence" value="ECO:0007669"/>
    <property type="project" value="InterPro"/>
</dbReference>
<dbReference type="GO" id="GO:0000049">
    <property type="term" value="F:tRNA binding"/>
    <property type="evidence" value="ECO:0007669"/>
    <property type="project" value="UniProtKB-UniRule"/>
</dbReference>
<dbReference type="GO" id="GO:0006412">
    <property type="term" value="P:translation"/>
    <property type="evidence" value="ECO:0007669"/>
    <property type="project" value="UniProtKB-UniRule"/>
</dbReference>
<dbReference type="FunFam" id="3.30.1440.10:FF:000001">
    <property type="entry name" value="50S ribosomal protein L5"/>
    <property type="match status" value="1"/>
</dbReference>
<dbReference type="Gene3D" id="3.30.1440.10">
    <property type="match status" value="1"/>
</dbReference>
<dbReference type="HAMAP" id="MF_01333_B">
    <property type="entry name" value="Ribosomal_uL5_B"/>
    <property type="match status" value="1"/>
</dbReference>
<dbReference type="InterPro" id="IPR002132">
    <property type="entry name" value="Ribosomal_uL5"/>
</dbReference>
<dbReference type="InterPro" id="IPR020930">
    <property type="entry name" value="Ribosomal_uL5_bac-type"/>
</dbReference>
<dbReference type="InterPro" id="IPR031309">
    <property type="entry name" value="Ribosomal_uL5_C"/>
</dbReference>
<dbReference type="InterPro" id="IPR020929">
    <property type="entry name" value="Ribosomal_uL5_CS"/>
</dbReference>
<dbReference type="InterPro" id="IPR022803">
    <property type="entry name" value="Ribosomal_uL5_dom_sf"/>
</dbReference>
<dbReference type="InterPro" id="IPR031310">
    <property type="entry name" value="Ribosomal_uL5_N"/>
</dbReference>
<dbReference type="NCBIfam" id="NF000585">
    <property type="entry name" value="PRK00010.1"/>
    <property type="match status" value="1"/>
</dbReference>
<dbReference type="PANTHER" id="PTHR11994">
    <property type="entry name" value="60S RIBOSOMAL PROTEIN L11-RELATED"/>
    <property type="match status" value="1"/>
</dbReference>
<dbReference type="Pfam" id="PF00281">
    <property type="entry name" value="Ribosomal_L5"/>
    <property type="match status" value="1"/>
</dbReference>
<dbReference type="Pfam" id="PF00673">
    <property type="entry name" value="Ribosomal_L5_C"/>
    <property type="match status" value="1"/>
</dbReference>
<dbReference type="PIRSF" id="PIRSF002161">
    <property type="entry name" value="Ribosomal_L5"/>
    <property type="match status" value="1"/>
</dbReference>
<dbReference type="SUPFAM" id="SSF55282">
    <property type="entry name" value="RL5-like"/>
    <property type="match status" value="1"/>
</dbReference>
<dbReference type="PROSITE" id="PS00358">
    <property type="entry name" value="RIBOSOMAL_L5"/>
    <property type="match status" value="1"/>
</dbReference>
<protein>
    <recommendedName>
        <fullName evidence="1">Large ribosomal subunit protein uL5</fullName>
    </recommendedName>
    <alternativeName>
        <fullName evidence="2">50S ribosomal protein L5</fullName>
    </alternativeName>
</protein>